<keyword id="KW-0235">DNA replication</keyword>
<keyword id="KW-0238">DNA-binding</keyword>
<keyword id="KW-0239">DNA-directed DNA polymerase</keyword>
<keyword id="KW-0255">Endonuclease</keyword>
<keyword id="KW-0945">Host-virus interaction</keyword>
<keyword id="KW-0378">Hydrolase</keyword>
<keyword id="KW-1090">Inhibition of host innate immune response by virus</keyword>
<keyword id="KW-1113">Inhibition of host RLR pathway by virus</keyword>
<keyword id="KW-0460">Magnesium</keyword>
<keyword id="KW-0479">Metal-binding</keyword>
<keyword id="KW-0511">Multifunctional enzyme</keyword>
<keyword id="KW-0540">Nuclease</keyword>
<keyword id="KW-0548">Nucleotidyltransferase</keyword>
<keyword id="KW-0695">RNA-directed DNA polymerase</keyword>
<keyword id="KW-0808">Transferase</keyword>
<keyword id="KW-0899">Viral immunoevasion</keyword>
<comment type="function">
    <text evidence="1">Multifunctional enzyme that converts the viral RNA genome into dsDNA in viral cytoplasmic capsids. This enzyme displays a DNA polymerase activity that can copy either DNA or RNA templates, and a ribonuclease H (RNase H) activity that cleaves the RNA strand of RNA-DNA heteroduplexes in a partially processive 3'- to 5'-endonucleasic mode. Neo-synthesized pregenomic RNA (pgRNA) are encapsidated together with the P protein, and reverse-transcribed inside the nucleocapsid. Initiation of reverse-transcription occurs first by binding the epsilon loop on the pgRNA genome, and is initiated by protein priming, thereby the 5'-end of (-)DNA is covalently linked to P protein. Partial (+)DNA is synthesized from the (-)DNA template and generates the relaxed circular DNA (RC-DNA) genome. After budding and infection, the RC-DNA migrates in the nucleus, and is converted into a plasmid-like covalently closed circular DNA (cccDNA). The activity of P protein does not seem to be necessary for cccDNA generation, and is presumably released from (+)DNA by host nuclear DNA repair machinery.</text>
</comment>
<comment type="catalytic activity">
    <reaction evidence="1">
        <text>DNA(n) + a 2'-deoxyribonucleoside 5'-triphosphate = DNA(n+1) + diphosphate</text>
        <dbReference type="Rhea" id="RHEA:22508"/>
        <dbReference type="Rhea" id="RHEA-COMP:17339"/>
        <dbReference type="Rhea" id="RHEA-COMP:17340"/>
        <dbReference type="ChEBI" id="CHEBI:33019"/>
        <dbReference type="ChEBI" id="CHEBI:61560"/>
        <dbReference type="ChEBI" id="CHEBI:173112"/>
        <dbReference type="EC" id="2.7.7.7"/>
    </reaction>
</comment>
<comment type="catalytic activity">
    <reaction evidence="1">
        <text>DNA(n) + a 2'-deoxyribonucleoside 5'-triphosphate = DNA(n+1) + diphosphate</text>
        <dbReference type="Rhea" id="RHEA:22508"/>
        <dbReference type="Rhea" id="RHEA-COMP:17339"/>
        <dbReference type="Rhea" id="RHEA-COMP:17340"/>
        <dbReference type="ChEBI" id="CHEBI:33019"/>
        <dbReference type="ChEBI" id="CHEBI:61560"/>
        <dbReference type="ChEBI" id="CHEBI:173112"/>
        <dbReference type="EC" id="2.7.7.49"/>
    </reaction>
</comment>
<comment type="catalytic activity">
    <reaction evidence="1">
        <text>Endonucleolytic cleavage to 5'-phosphomonoester.</text>
        <dbReference type="EC" id="3.1.26.4"/>
    </reaction>
</comment>
<comment type="activity regulation">
    <text evidence="1">Activated by host HSP70 and HSP40 in vitro to be able to bind the epsilon loop of the pgRNA. Because deletion of the RNase H region renders the protein partly chaperone-independent, the chaperones may be needed indirectly to relieve occlusion of the RNA-binding site by this domain. Inhibited by several reverse-transcriptase inhibitors: Lamivudine, Adefovir and Entecavir.</text>
</comment>
<comment type="domain">
    <text evidence="1">Terminal protein domain (TP) is hepadnavirus-specific. Spacer domain is highly variable and separates the TP and RT domains. Polymerase/reverse-transcriptase domain (RT) and ribonuclease H domain (RH) are similar to retrovirus reverse transcriptase/RNase H.</text>
</comment>
<comment type="domain">
    <text evidence="1">The polymerase/reverse transcriptase (RT) and ribonuclease H (RH) domains are structured in five subdomains: finger, palm, thumb, connection and RNase H. Within the palm subdomain, the 'primer grip' region is thought to be involved in the positioning of the primer terminus for accommodating the incoming nucleotide. The RH domain stabilizes the association of RT with primer-template.</text>
</comment>
<comment type="miscellaneous">
    <text evidence="1">Hepadnaviral virions contain probably just one P protein molecule per particle.</text>
</comment>
<comment type="similarity">
    <text evidence="1">Belongs to the hepadnaviridae P protein family.</text>
</comment>
<gene>
    <name evidence="1" type="primary">P</name>
</gene>
<dbReference type="EC" id="2.7.7.7" evidence="1"/>
<dbReference type="EC" id="2.7.7.49" evidence="1"/>
<dbReference type="EC" id="3.1.26.4" evidence="1"/>
<dbReference type="EMBL" id="D00330">
    <property type="status" value="NOT_ANNOTATED_CDS"/>
    <property type="molecule type" value="Genomic_DNA"/>
</dbReference>
<dbReference type="PIR" id="E28925">
    <property type="entry name" value="JDVLJ2"/>
</dbReference>
<dbReference type="Proteomes" id="UP000007916">
    <property type="component" value="Genome"/>
</dbReference>
<dbReference type="GO" id="GO:0003677">
    <property type="term" value="F:DNA binding"/>
    <property type="evidence" value="ECO:0007669"/>
    <property type="project" value="UniProtKB-UniRule"/>
</dbReference>
<dbReference type="GO" id="GO:0003887">
    <property type="term" value="F:DNA-directed DNA polymerase activity"/>
    <property type="evidence" value="ECO:0007669"/>
    <property type="project" value="UniProtKB-UniRule"/>
</dbReference>
<dbReference type="GO" id="GO:0046872">
    <property type="term" value="F:metal ion binding"/>
    <property type="evidence" value="ECO:0007669"/>
    <property type="project" value="UniProtKB-UniRule"/>
</dbReference>
<dbReference type="GO" id="GO:0003964">
    <property type="term" value="F:RNA-directed DNA polymerase activity"/>
    <property type="evidence" value="ECO:0007669"/>
    <property type="project" value="UniProtKB-UniRule"/>
</dbReference>
<dbReference type="GO" id="GO:0004523">
    <property type="term" value="F:RNA-DNA hybrid ribonuclease activity"/>
    <property type="evidence" value="ECO:0007669"/>
    <property type="project" value="UniProtKB-UniRule"/>
</dbReference>
<dbReference type="GO" id="GO:0006260">
    <property type="term" value="P:DNA replication"/>
    <property type="evidence" value="ECO:0007669"/>
    <property type="project" value="UniProtKB-UniRule"/>
</dbReference>
<dbReference type="GO" id="GO:0052170">
    <property type="term" value="P:symbiont-mediated suppression of host innate immune response"/>
    <property type="evidence" value="ECO:0007669"/>
    <property type="project" value="UniProtKB-UniRule"/>
</dbReference>
<dbReference type="FunFam" id="3.30.70.270:FF:000009">
    <property type="entry name" value="Protein P"/>
    <property type="match status" value="1"/>
</dbReference>
<dbReference type="Gene3D" id="3.30.70.270">
    <property type="match status" value="1"/>
</dbReference>
<dbReference type="HAMAP" id="MF_04073">
    <property type="entry name" value="HBV_DPOL"/>
    <property type="match status" value="1"/>
</dbReference>
<dbReference type="InterPro" id="IPR043502">
    <property type="entry name" value="DNA/RNA_pol_sf"/>
</dbReference>
<dbReference type="InterPro" id="IPR001462">
    <property type="entry name" value="DNApol_viral_C"/>
</dbReference>
<dbReference type="InterPro" id="IPR000201">
    <property type="entry name" value="DNApol_viral_N"/>
</dbReference>
<dbReference type="InterPro" id="IPR037531">
    <property type="entry name" value="HBV_DPOL"/>
</dbReference>
<dbReference type="InterPro" id="IPR043128">
    <property type="entry name" value="Rev_trsase/Diguanyl_cyclase"/>
</dbReference>
<dbReference type="InterPro" id="IPR000477">
    <property type="entry name" value="RT_dom"/>
</dbReference>
<dbReference type="InterPro" id="IPR051320">
    <property type="entry name" value="Viral_Replic_Matur_Polypro"/>
</dbReference>
<dbReference type="PANTHER" id="PTHR33064:SF29">
    <property type="entry name" value="PEPTIDASE A2 DOMAIN-CONTAINING PROTEIN-RELATED"/>
    <property type="match status" value="1"/>
</dbReference>
<dbReference type="PANTHER" id="PTHR33064">
    <property type="entry name" value="POL PROTEIN"/>
    <property type="match status" value="1"/>
</dbReference>
<dbReference type="Pfam" id="PF00336">
    <property type="entry name" value="DNA_pol_viral_C"/>
    <property type="match status" value="1"/>
</dbReference>
<dbReference type="Pfam" id="PF00242">
    <property type="entry name" value="DNA_pol_viral_N"/>
    <property type="match status" value="1"/>
</dbReference>
<dbReference type="Pfam" id="PF00078">
    <property type="entry name" value="RVT_1"/>
    <property type="match status" value="1"/>
</dbReference>
<dbReference type="SUPFAM" id="SSF56672">
    <property type="entry name" value="DNA/RNA polymerases"/>
    <property type="match status" value="1"/>
</dbReference>
<dbReference type="PROSITE" id="PS50878">
    <property type="entry name" value="RT_POL"/>
    <property type="match status" value="1"/>
</dbReference>
<accession>P17395</accession>
<feature type="chain" id="PRO_0000222342" description="Protein P">
    <location>
        <begin position="1"/>
        <end position="843"/>
    </location>
</feature>
<feature type="domain" description="Reverse transcriptase" evidence="1">
    <location>
        <begin position="357"/>
        <end position="600"/>
    </location>
</feature>
<feature type="region of interest" description="Terminal protein domain (TP)" evidence="1">
    <location>
        <begin position="1"/>
        <end position="177"/>
    </location>
</feature>
<feature type="region of interest" description="Spacer" evidence="1">
    <location>
        <begin position="178"/>
        <end position="346"/>
    </location>
</feature>
<feature type="region of interest" description="Disordered" evidence="2">
    <location>
        <begin position="220"/>
        <end position="269"/>
    </location>
</feature>
<feature type="region of interest" description="Disordered" evidence="2">
    <location>
        <begin position="291"/>
        <end position="316"/>
    </location>
</feature>
<feature type="region of interest" description="Polymerase/reverse transcriptase domain (RT)" evidence="1">
    <location>
        <begin position="347"/>
        <end position="690"/>
    </location>
</feature>
<feature type="binding site" evidence="1">
    <location>
        <position position="429"/>
    </location>
    <ligand>
        <name>Mg(2+)</name>
        <dbReference type="ChEBI" id="CHEBI:18420"/>
        <note>catalytic</note>
    </ligand>
</feature>
<feature type="binding site" evidence="1">
    <location>
        <position position="551"/>
    </location>
    <ligand>
        <name>Mg(2+)</name>
        <dbReference type="ChEBI" id="CHEBI:18420"/>
        <note>catalytic</note>
    </ligand>
</feature>
<feature type="binding site" evidence="1">
    <location>
        <position position="552"/>
    </location>
    <ligand>
        <name>Mg(2+)</name>
        <dbReference type="ChEBI" id="CHEBI:18420"/>
        <note>catalytic</note>
    </ligand>
</feature>
<feature type="site" description="Priming of reverse-transcription by covalently linking the first nucleotide of the (-)DNA" evidence="1">
    <location>
        <position position="63"/>
    </location>
</feature>
<organismHost>
    <name type="scientific">Homo sapiens</name>
    <name type="common">Human</name>
    <dbReference type="NCBI Taxonomy" id="9606"/>
</organismHost>
<organismHost>
    <name type="scientific">Pan troglodytes</name>
    <name type="common">Chimpanzee</name>
    <dbReference type="NCBI Taxonomy" id="9598"/>
</organismHost>
<organism>
    <name type="scientific">Hepatitis B virus genotype B/C subtype adw (isolate Okinawa/pODW282/1998)</name>
    <name type="common">HBV-B</name>
    <dbReference type="NCBI Taxonomy" id="10415"/>
    <lineage>
        <taxon>Viruses</taxon>
        <taxon>Riboviria</taxon>
        <taxon>Pararnavirae</taxon>
        <taxon>Artverviricota</taxon>
        <taxon>Revtraviricetes</taxon>
        <taxon>Blubervirales</taxon>
        <taxon>Hepadnaviridae</taxon>
        <taxon>Orthohepadnavirus</taxon>
        <taxon>Hepatitis B virus</taxon>
    </lineage>
</organism>
<reference key="1">
    <citation type="journal article" date="1988" name="J. Gen. Virol.">
        <title>Typing hepatitis B virus by homology in nucleotide sequence: comparison of surface antigen subtypes.</title>
        <authorList>
            <person name="Okamoto H."/>
            <person name="Tsuda F."/>
            <person name="Sakugawa H."/>
            <person name="Sastrosoewignjo R.I."/>
            <person name="Imai M."/>
            <person name="Miyakawa Y."/>
            <person name="Mayumi M."/>
        </authorList>
    </citation>
    <scope>NUCLEOTIDE SEQUENCE [GENOMIC DNA]</scope>
</reference>
<reference key="2">
    <citation type="journal article" date="2007" name="World J. Gastroenterol.">
        <title>Hepatitis B virus replication.</title>
        <authorList>
            <person name="Beck J."/>
            <person name="Nassal M."/>
        </authorList>
    </citation>
    <scope>REVIEW</scope>
</reference>
<name>DPOL_HBVB4</name>
<sequence>MPLSYQHFRKLLLLDEEAGPLEEELPRLADEGLNRRVAEDLNLGNLNVSIPWTHKVGNFTGLYSSTVPCFNPKWQTPSFPDIHLQEDIVDRCKQFVGPLTVNENRRLKLIMPARFYPNVTKYLPLDKGIKPYYPEYVVNHYFQTRHYLHTLWKAGILYKRESTRSASFCGSPYSWEQDLQHGRLVFQTSKRHGDKSFCPQSSGILPRSSVGPCIQSQLRKSRLGPQPEQGQLAGRQQGGSGSIRARVHPSPWGTVGVEPSGSGPTHNCASSSSSCLHQSAVRKAAYSLIPTSKGHSSSGHAVELHHFPPNSSRSRSQGPVLSCWWLQFRNSEPCSEYCLCHIVNLIEDWGPCTEHGEHRIRTPRTPARVTGGVFLVDKNPHNTTESRLVVDFSQFSRGNTRVSWPKFAVPNLQSLTNLLSSNLSWLSLDVSAAFYHLPLHPAAMPHLLVGSSGLSRYVARLSSNSRIINNQHRTMQNLHNSCSRNLYVSLMLLYKTYGWKLHLYSHPIILGFRKIPMGVGLSPFLLAQFTSAICSVVRRAFPHCLAFSYMDDMVLGAKSVQHLESLYAAVTNFLLSLGIHLNPHKTKRWGYSLNFMGYVIGSWGTLPQEHIVQKIKMWFRKLPVNRPIDWKVCQRIVGLLGFAAPFTQCGYPALMPLYACIQAKQAFTFSPTYKAFLTKQYLNLYPVARQRPGLCQVFADATPTGWGLAIGHQRMRGTFVSPLPIHTAELLAACFARSRSGAKLIGTDNSVVLSRKYTSFPWLLGCAANWILRGTSFVYVPSALNPADDPSRGRLGLYRPLLRLLYRPTTGRTSLYADSPSVPSHLPDRVHFASPLHVAWRPP</sequence>
<protein>
    <recommendedName>
        <fullName evidence="1">Protein P</fullName>
    </recommendedName>
    <domain>
        <recommendedName>
            <fullName evidence="1">DNA-directed DNA polymerase</fullName>
            <ecNumber evidence="1">2.7.7.7</ecNumber>
        </recommendedName>
    </domain>
    <domain>
        <recommendedName>
            <fullName evidence="1">RNA-directed DNA polymerase</fullName>
            <ecNumber evidence="1">2.7.7.49</ecNumber>
        </recommendedName>
    </domain>
    <domain>
        <recommendedName>
            <fullName evidence="1">Ribonuclease H</fullName>
            <ecNumber evidence="1">3.1.26.4</ecNumber>
        </recommendedName>
    </domain>
</protein>
<proteinExistence type="inferred from homology"/>
<evidence type="ECO:0000255" key="1">
    <source>
        <dbReference type="HAMAP-Rule" id="MF_04073"/>
    </source>
</evidence>
<evidence type="ECO:0000256" key="2">
    <source>
        <dbReference type="SAM" id="MobiDB-lite"/>
    </source>
</evidence>